<accession>P26239</accession>
<accession>D5ANT8</accession>
<sequence length="350" mass="37899">MTTAVARLQPSASGAKTRPVFPFSAIVGQEDMKLALLLTAVDPGIGGVLVFGDRGTGKSTAVRALAALLPEIEAVEGCPVSSPNVEMIPDWATVLSTNVIRKPTPVVDLPLGVSEDRVVGALDIERAISKGEKAFEPGLLARANRGYLYIDECNLLEDHIVDLLLDVAQSGENVVERDGLSIRHPARFVLVGSGNPEEGDLRPQLLDRFGLSVEVLSPRDVETRVEVIRRRDTYDADPKAFLEEWRPKDMDIRNQILEARERLPKVEAPNTALYDCAALCIALGSDGLRGELTLLRSARALAALEGATAVGRDHLKRVATMALSHRLRRDPLDEAGSTARVARTVEETLP</sequence>
<proteinExistence type="evidence at protein level"/>
<gene>
    <name type="primary">bchI</name>
    <name type="ordered locus">RCAP_rcc00677</name>
</gene>
<feature type="chain" id="PRO_0000206859" description="Magnesium-chelatase 38 kDa subunit">
    <location>
        <begin position="1"/>
        <end position="350"/>
    </location>
</feature>
<feature type="binding site" evidence="1">
    <location>
        <begin position="52"/>
        <end position="59"/>
    </location>
    <ligand>
        <name>ATP</name>
        <dbReference type="ChEBI" id="CHEBI:30616"/>
    </ligand>
</feature>
<feature type="helix" evidence="3">
    <location>
        <begin position="23"/>
        <end position="25"/>
    </location>
</feature>
<feature type="helix" evidence="3">
    <location>
        <begin position="30"/>
        <end position="41"/>
    </location>
</feature>
<feature type="helix" evidence="3">
    <location>
        <begin position="43"/>
        <end position="45"/>
    </location>
</feature>
<feature type="strand" evidence="3">
    <location>
        <begin position="48"/>
        <end position="51"/>
    </location>
</feature>
<feature type="helix" evidence="3">
    <location>
        <begin position="54"/>
        <end position="56"/>
    </location>
</feature>
<feature type="helix" evidence="3">
    <location>
        <begin position="60"/>
        <end position="68"/>
    </location>
</feature>
<feature type="strand" evidence="3">
    <location>
        <begin position="72"/>
        <end position="75"/>
    </location>
</feature>
<feature type="helix" evidence="3">
    <location>
        <begin position="85"/>
        <end position="87"/>
    </location>
</feature>
<feature type="strand" evidence="3">
    <location>
        <begin position="99"/>
        <end position="102"/>
    </location>
</feature>
<feature type="strand" evidence="3">
    <location>
        <begin position="106"/>
        <end position="109"/>
    </location>
</feature>
<feature type="helix" evidence="3">
    <location>
        <begin position="115"/>
        <end position="119"/>
    </location>
</feature>
<feature type="helix" evidence="3">
    <location>
        <begin position="124"/>
        <end position="130"/>
    </location>
</feature>
<feature type="helix" evidence="3">
    <location>
        <begin position="132"/>
        <end position="134"/>
    </location>
</feature>
<feature type="helix" evidence="3">
    <location>
        <begin position="139"/>
        <end position="143"/>
    </location>
</feature>
<feature type="strand" evidence="3">
    <location>
        <begin position="146"/>
        <end position="150"/>
    </location>
</feature>
<feature type="helix" evidence="3">
    <location>
        <begin position="153"/>
        <end position="155"/>
    </location>
</feature>
<feature type="helix" evidence="3">
    <location>
        <begin position="158"/>
        <end position="170"/>
    </location>
</feature>
<feature type="strand" evidence="3">
    <location>
        <begin position="171"/>
        <end position="175"/>
    </location>
</feature>
<feature type="strand" evidence="3">
    <location>
        <begin position="182"/>
        <end position="185"/>
    </location>
</feature>
<feature type="strand" evidence="3">
    <location>
        <begin position="188"/>
        <end position="194"/>
    </location>
</feature>
<feature type="helix" evidence="3">
    <location>
        <begin position="203"/>
        <end position="206"/>
    </location>
</feature>
<feature type="strand" evidence="3">
    <location>
        <begin position="210"/>
        <end position="214"/>
    </location>
</feature>
<feature type="helix" evidence="3">
    <location>
        <begin position="221"/>
        <end position="236"/>
    </location>
</feature>
<feature type="helix" evidence="3">
    <location>
        <begin position="238"/>
        <end position="262"/>
    </location>
</feature>
<feature type="helix" evidence="3">
    <location>
        <begin position="263"/>
        <end position="265"/>
    </location>
</feature>
<feature type="helix" evidence="3">
    <location>
        <begin position="270"/>
        <end position="282"/>
    </location>
</feature>
<feature type="strand" evidence="3">
    <location>
        <begin position="283"/>
        <end position="285"/>
    </location>
</feature>
<feature type="helix" evidence="3">
    <location>
        <begin position="288"/>
        <end position="304"/>
    </location>
</feature>
<feature type="helix" evidence="3">
    <location>
        <begin position="312"/>
        <end position="323"/>
    </location>
</feature>
<feature type="helix" evidence="3">
    <location>
        <begin position="324"/>
        <end position="326"/>
    </location>
</feature>
<feature type="helix" evidence="3">
    <location>
        <begin position="342"/>
        <end position="348"/>
    </location>
</feature>
<organism>
    <name type="scientific">Rhodobacter capsulatus (strain ATCC BAA-309 / NBRC 16581 / SB1003)</name>
    <dbReference type="NCBI Taxonomy" id="272942"/>
    <lineage>
        <taxon>Bacteria</taxon>
        <taxon>Pseudomonadati</taxon>
        <taxon>Pseudomonadota</taxon>
        <taxon>Alphaproteobacteria</taxon>
        <taxon>Rhodobacterales</taxon>
        <taxon>Rhodobacter group</taxon>
        <taxon>Rhodobacter</taxon>
    </lineage>
</organism>
<comment type="function">
    <text>Involved in bacteriochlorophyll biosynthesis; introduces a magnesium ion into protoporphyrin IX to yield Mg-protoporphyrin IX.</text>
</comment>
<comment type="catalytic activity">
    <reaction>
        <text>protoporphyrin IX + Mg(2+) + ATP + H2O = Mg-protoporphyrin IX + ADP + phosphate + 3 H(+)</text>
        <dbReference type="Rhea" id="RHEA:13961"/>
        <dbReference type="ChEBI" id="CHEBI:15377"/>
        <dbReference type="ChEBI" id="CHEBI:15378"/>
        <dbReference type="ChEBI" id="CHEBI:18420"/>
        <dbReference type="ChEBI" id="CHEBI:30616"/>
        <dbReference type="ChEBI" id="CHEBI:43474"/>
        <dbReference type="ChEBI" id="CHEBI:57306"/>
        <dbReference type="ChEBI" id="CHEBI:60492"/>
        <dbReference type="ChEBI" id="CHEBI:456216"/>
        <dbReference type="EC" id="6.6.1.1"/>
    </reaction>
</comment>
<comment type="pathway">
    <text>Porphyrin-containing compound metabolism; bacteriochlorophyll biosynthesis.</text>
</comment>
<comment type="interaction">
    <interactant intactId="EBI-8453273">
        <id>P26239</id>
    </interactant>
    <interactant intactId="EBI-8453255">
        <id>P26175</id>
        <label>bchD</label>
    </interactant>
    <organismsDiffer>false</organismsDiffer>
    <experiments>5</experiments>
</comment>
<comment type="similarity">
    <text evidence="2">Belongs to the Mg-chelatase subunits D/I family.</text>
</comment>
<keyword id="KW-0002">3D-structure</keyword>
<keyword id="KW-0067">ATP-binding</keyword>
<keyword id="KW-0077">Bacteriochlorophyll biosynthesis</keyword>
<keyword id="KW-0149">Chlorophyll biosynthesis</keyword>
<keyword id="KW-0436">Ligase</keyword>
<keyword id="KW-0547">Nucleotide-binding</keyword>
<keyword id="KW-0602">Photosynthesis</keyword>
<keyword id="KW-1185">Reference proteome</keyword>
<name>BCHI_RHOCB</name>
<reference key="1">
    <citation type="submission" date="1991-11" db="EMBL/GenBank/DDBJ databases">
        <authorList>
            <person name="Burke D.H."/>
            <person name="Alberti M."/>
            <person name="Armstrong G.A."/>
            <person name="Hearst J.E."/>
        </authorList>
    </citation>
    <scope>NUCLEOTIDE SEQUENCE [GENOMIC DNA]</scope>
    <source>
        <strain>ATCC BAA-309 / NBRC 16581 / SB1003</strain>
    </source>
</reference>
<reference key="2">
    <citation type="journal article" date="1989" name="Mol. Gen. Genet.">
        <title>Nucleotide sequence, organization, and nature of the protein products of the carotenoid biosynthesis gene cluster of Rhodobacter capsulatus.</title>
        <authorList>
            <person name="Armstrong G.A."/>
            <person name="Alberti M."/>
            <person name="Leach F."/>
            <person name="Hearst J.E."/>
        </authorList>
    </citation>
    <scope>NUCLEOTIDE SEQUENCE [GENOMIC DNA]</scope>
    <source>
        <strain>ATCC BAA-309 / NBRC 16581 / SB1003</strain>
    </source>
</reference>
<reference key="3">
    <citation type="journal article" date="2010" name="J. Bacteriol.">
        <title>Complete genome sequence of the photosynthetic purple nonsulfur bacterium Rhodobacter capsulatus SB 1003.</title>
        <authorList>
            <person name="Strnad H."/>
            <person name="Lapidus A."/>
            <person name="Paces J."/>
            <person name="Ulbrich P."/>
            <person name="Vlcek C."/>
            <person name="Paces V."/>
            <person name="Haselkorn R."/>
        </authorList>
    </citation>
    <scope>NUCLEOTIDE SEQUENCE [LARGE SCALE GENOMIC DNA]</scope>
    <source>
        <strain>ATCC BAA-309 / NBRC 16581 / SB1003</strain>
    </source>
</reference>
<evidence type="ECO:0000255" key="1"/>
<evidence type="ECO:0000305" key="2"/>
<evidence type="ECO:0007829" key="3">
    <source>
        <dbReference type="PDB" id="1G8P"/>
    </source>
</evidence>
<dbReference type="EC" id="6.6.1.1"/>
<dbReference type="EMBL" id="Z11165">
    <property type="protein sequence ID" value="CAA77538.1"/>
    <property type="molecule type" value="Genomic_DNA"/>
</dbReference>
<dbReference type="EMBL" id="CP001312">
    <property type="protein sequence ID" value="ADE84442.1"/>
    <property type="molecule type" value="Genomic_DNA"/>
</dbReference>
<dbReference type="RefSeq" id="WP_013066421.1">
    <property type="nucleotide sequence ID" value="NC_014034.1"/>
</dbReference>
<dbReference type="PDB" id="1G8P">
    <property type="method" value="X-ray"/>
    <property type="resolution" value="2.10 A"/>
    <property type="chains" value="A=1-350"/>
</dbReference>
<dbReference type="PDB" id="2X31">
    <property type="method" value="EM"/>
    <property type="resolution" value="7.50 A"/>
    <property type="chains" value="G/H/I/J/K/L=1-350"/>
</dbReference>
<dbReference type="PDBsum" id="1G8P"/>
<dbReference type="PDBsum" id="2X31"/>
<dbReference type="SMR" id="P26239"/>
<dbReference type="DIP" id="DIP-58976N"/>
<dbReference type="IntAct" id="P26239">
    <property type="interactions" value="1"/>
</dbReference>
<dbReference type="MINT" id="P26239"/>
<dbReference type="STRING" id="272942.RCAP_rcc00677"/>
<dbReference type="GeneID" id="31489623"/>
<dbReference type="KEGG" id="rcp:RCAP_rcc00677"/>
<dbReference type="eggNOG" id="COG1239">
    <property type="taxonomic scope" value="Bacteria"/>
</dbReference>
<dbReference type="HOGENOM" id="CLU_016684_0_2_5"/>
<dbReference type="OrthoDB" id="9775079at2"/>
<dbReference type="BRENDA" id="6.6.1.1">
    <property type="organism ID" value="5381"/>
</dbReference>
<dbReference type="UniPathway" id="UPA00669"/>
<dbReference type="EvolutionaryTrace" id="P26239"/>
<dbReference type="Proteomes" id="UP000002361">
    <property type="component" value="Chromosome"/>
</dbReference>
<dbReference type="GO" id="GO:0005524">
    <property type="term" value="F:ATP binding"/>
    <property type="evidence" value="ECO:0007669"/>
    <property type="project" value="UniProtKB-KW"/>
</dbReference>
<dbReference type="GO" id="GO:0016887">
    <property type="term" value="F:ATP hydrolysis activity"/>
    <property type="evidence" value="ECO:0007669"/>
    <property type="project" value="InterPro"/>
</dbReference>
<dbReference type="GO" id="GO:0016851">
    <property type="term" value="F:magnesium chelatase activity"/>
    <property type="evidence" value="ECO:0007669"/>
    <property type="project" value="UniProtKB-EC"/>
</dbReference>
<dbReference type="GO" id="GO:0030494">
    <property type="term" value="P:bacteriochlorophyll biosynthetic process"/>
    <property type="evidence" value="ECO:0007669"/>
    <property type="project" value="UniProtKB-UniPathway"/>
</dbReference>
<dbReference type="GO" id="GO:0015979">
    <property type="term" value="P:photosynthesis"/>
    <property type="evidence" value="ECO:0007669"/>
    <property type="project" value="UniProtKB-KW"/>
</dbReference>
<dbReference type="CDD" id="cd00009">
    <property type="entry name" value="AAA"/>
    <property type="match status" value="1"/>
</dbReference>
<dbReference type="Gene3D" id="1.10.8.80">
    <property type="entry name" value="Magnesium chelatase subunit I, C-Terminal domain"/>
    <property type="match status" value="1"/>
</dbReference>
<dbReference type="Gene3D" id="3.40.50.300">
    <property type="entry name" value="P-loop containing nucleotide triphosphate hydrolases"/>
    <property type="match status" value="1"/>
</dbReference>
<dbReference type="InterPro" id="IPR003593">
    <property type="entry name" value="AAA+_ATPase"/>
</dbReference>
<dbReference type="InterPro" id="IPR045006">
    <property type="entry name" value="CHLI-like"/>
</dbReference>
<dbReference type="InterPro" id="IPR041628">
    <property type="entry name" value="ChlI/MoxR_AAA_lid"/>
</dbReference>
<dbReference type="InterPro" id="IPR011775">
    <property type="entry name" value="Mg_chelatase_ATPase-isu"/>
</dbReference>
<dbReference type="InterPro" id="IPR000523">
    <property type="entry name" value="Mg_chelatse_chII-like_cat_dom"/>
</dbReference>
<dbReference type="InterPro" id="IPR027417">
    <property type="entry name" value="P-loop_NTPase"/>
</dbReference>
<dbReference type="NCBIfam" id="TIGR02030">
    <property type="entry name" value="BchI-ChlI"/>
    <property type="match status" value="1"/>
</dbReference>
<dbReference type="PANTHER" id="PTHR32039">
    <property type="entry name" value="MAGNESIUM-CHELATASE SUBUNIT CHLI"/>
    <property type="match status" value="1"/>
</dbReference>
<dbReference type="PANTHER" id="PTHR32039:SF9">
    <property type="entry name" value="MAGNESIUM-CHELATASE SUBUNIT CHLI-2, CHLOROPLASTIC"/>
    <property type="match status" value="1"/>
</dbReference>
<dbReference type="Pfam" id="PF17863">
    <property type="entry name" value="AAA_lid_2"/>
    <property type="match status" value="1"/>
</dbReference>
<dbReference type="Pfam" id="PF01078">
    <property type="entry name" value="Mg_chelatase"/>
    <property type="match status" value="1"/>
</dbReference>
<dbReference type="SMART" id="SM00382">
    <property type="entry name" value="AAA"/>
    <property type="match status" value="1"/>
</dbReference>
<dbReference type="SUPFAM" id="SSF52540">
    <property type="entry name" value="P-loop containing nucleoside triphosphate hydrolases"/>
    <property type="match status" value="1"/>
</dbReference>
<protein>
    <recommendedName>
        <fullName>Magnesium-chelatase 38 kDa subunit</fullName>
        <ecNumber>6.6.1.1</ecNumber>
    </recommendedName>
    <alternativeName>
        <fullName>Mg-protoporphyrin IX chelatase</fullName>
    </alternativeName>
</protein>